<accession>Q32G89</accession>
<evidence type="ECO:0000255" key="1">
    <source>
        <dbReference type="HAMAP-Rule" id="MF_01171"/>
    </source>
</evidence>
<feature type="chain" id="PRO_0000262331" description="Arginine N-succinyltransferase">
    <location>
        <begin position="1"/>
        <end position="344"/>
    </location>
</feature>
<feature type="active site" description="Proton donor" evidence="1">
    <location>
        <position position="229"/>
    </location>
</feature>
<feature type="binding site" evidence="1">
    <location>
        <position position="125"/>
    </location>
    <ligand>
        <name>succinyl-CoA</name>
        <dbReference type="ChEBI" id="CHEBI:57292"/>
    </ligand>
</feature>
<dbReference type="EC" id="2.3.1.109" evidence="1"/>
<dbReference type="EMBL" id="CP000034">
    <property type="protein sequence ID" value="ABB61666.1"/>
    <property type="molecule type" value="Genomic_DNA"/>
</dbReference>
<dbReference type="RefSeq" id="WP_000989462.1">
    <property type="nucleotide sequence ID" value="NC_007606.1"/>
</dbReference>
<dbReference type="RefSeq" id="YP_403157.1">
    <property type="nucleotide sequence ID" value="NC_007606.1"/>
</dbReference>
<dbReference type="SMR" id="Q32G89"/>
<dbReference type="STRING" id="300267.SDY_1530"/>
<dbReference type="EnsemblBacteria" id="ABB61666">
    <property type="protein sequence ID" value="ABB61666"/>
    <property type="gene ID" value="SDY_1530"/>
</dbReference>
<dbReference type="KEGG" id="sdy:SDY_1530"/>
<dbReference type="PATRIC" id="fig|300267.13.peg.1833"/>
<dbReference type="HOGENOM" id="CLU_057655_0_0_6"/>
<dbReference type="UniPathway" id="UPA00185">
    <property type="reaction ID" value="UER00279"/>
</dbReference>
<dbReference type="Proteomes" id="UP000002716">
    <property type="component" value="Chromosome"/>
</dbReference>
<dbReference type="GO" id="GO:0008791">
    <property type="term" value="F:arginine N-succinyltransferase activity"/>
    <property type="evidence" value="ECO:0007669"/>
    <property type="project" value="UniProtKB-UniRule"/>
</dbReference>
<dbReference type="GO" id="GO:0019544">
    <property type="term" value="P:arginine catabolic process to glutamate"/>
    <property type="evidence" value="ECO:0007669"/>
    <property type="project" value="UniProtKB-UniRule"/>
</dbReference>
<dbReference type="GO" id="GO:0019545">
    <property type="term" value="P:arginine catabolic process to succinate"/>
    <property type="evidence" value="ECO:0007669"/>
    <property type="project" value="UniProtKB-UniRule"/>
</dbReference>
<dbReference type="Gene3D" id="2.40.40.20">
    <property type="match status" value="1"/>
</dbReference>
<dbReference type="Gene3D" id="3.40.630.30">
    <property type="match status" value="1"/>
</dbReference>
<dbReference type="HAMAP" id="MF_01171">
    <property type="entry name" value="AstA"/>
    <property type="match status" value="1"/>
</dbReference>
<dbReference type="InterPro" id="IPR016181">
    <property type="entry name" value="Acyl_CoA_acyltransferase"/>
</dbReference>
<dbReference type="InterPro" id="IPR007041">
    <property type="entry name" value="Arg_succinylTrfase_AstA/AruG"/>
</dbReference>
<dbReference type="InterPro" id="IPR017650">
    <property type="entry name" value="Arginine_N-succinylTrfase"/>
</dbReference>
<dbReference type="NCBIfam" id="TIGR03243">
    <property type="entry name" value="arg_catab_AOST"/>
    <property type="match status" value="1"/>
</dbReference>
<dbReference type="NCBIfam" id="TIGR03244">
    <property type="entry name" value="arg_catab_AstA"/>
    <property type="match status" value="1"/>
</dbReference>
<dbReference type="NCBIfam" id="NF007770">
    <property type="entry name" value="PRK10456.1"/>
    <property type="match status" value="1"/>
</dbReference>
<dbReference type="PANTHER" id="PTHR30420:SF1">
    <property type="entry name" value="ARGININE N-SUCCINYLTRANSFERASE"/>
    <property type="match status" value="1"/>
</dbReference>
<dbReference type="PANTHER" id="PTHR30420">
    <property type="entry name" value="N-SUCCINYLARGININE DIHYDROLASE"/>
    <property type="match status" value="1"/>
</dbReference>
<dbReference type="Pfam" id="PF04958">
    <property type="entry name" value="AstA"/>
    <property type="match status" value="1"/>
</dbReference>
<dbReference type="SUPFAM" id="SSF55729">
    <property type="entry name" value="Acyl-CoA N-acyltransferases (Nat)"/>
    <property type="match status" value="1"/>
</dbReference>
<protein>
    <recommendedName>
        <fullName evidence="1">Arginine N-succinyltransferase</fullName>
        <shortName evidence="1">AST</shortName>
        <ecNumber evidence="1">2.3.1.109</ecNumber>
    </recommendedName>
    <alternativeName>
        <fullName evidence="1">AOST</fullName>
    </alternativeName>
</protein>
<organism>
    <name type="scientific">Shigella dysenteriae serotype 1 (strain Sd197)</name>
    <dbReference type="NCBI Taxonomy" id="300267"/>
    <lineage>
        <taxon>Bacteria</taxon>
        <taxon>Pseudomonadati</taxon>
        <taxon>Pseudomonadota</taxon>
        <taxon>Gammaproteobacteria</taxon>
        <taxon>Enterobacterales</taxon>
        <taxon>Enterobacteriaceae</taxon>
        <taxon>Shigella</taxon>
    </lineage>
</organism>
<proteinExistence type="inferred from homology"/>
<keyword id="KW-0012">Acyltransferase</keyword>
<keyword id="KW-0056">Arginine metabolism</keyword>
<keyword id="KW-1185">Reference proteome</keyword>
<keyword id="KW-0808">Transferase</keyword>
<comment type="function">
    <text evidence="1">Catalyzes the transfer of succinyl-CoA to arginine to produce N(2)-succinylarginine.</text>
</comment>
<comment type="catalytic activity">
    <reaction evidence="1">
        <text>succinyl-CoA + L-arginine = N(2)-succinyl-L-arginine + CoA + H(+)</text>
        <dbReference type="Rhea" id="RHEA:15185"/>
        <dbReference type="ChEBI" id="CHEBI:15378"/>
        <dbReference type="ChEBI" id="CHEBI:32682"/>
        <dbReference type="ChEBI" id="CHEBI:57287"/>
        <dbReference type="ChEBI" id="CHEBI:57292"/>
        <dbReference type="ChEBI" id="CHEBI:58241"/>
        <dbReference type="EC" id="2.3.1.109"/>
    </reaction>
</comment>
<comment type="pathway">
    <text evidence="1">Amino-acid degradation; L-arginine degradation via AST pathway; L-glutamate and succinate from L-arginine: step 1/5.</text>
</comment>
<comment type="similarity">
    <text evidence="1">Belongs to the arginine N-succinyltransferase family.</text>
</comment>
<reference key="1">
    <citation type="journal article" date="2005" name="Nucleic Acids Res.">
        <title>Genome dynamics and diversity of Shigella species, the etiologic agents of bacillary dysentery.</title>
        <authorList>
            <person name="Yang F."/>
            <person name="Yang J."/>
            <person name="Zhang X."/>
            <person name="Chen L."/>
            <person name="Jiang Y."/>
            <person name="Yan Y."/>
            <person name="Tang X."/>
            <person name="Wang J."/>
            <person name="Xiong Z."/>
            <person name="Dong J."/>
            <person name="Xue Y."/>
            <person name="Zhu Y."/>
            <person name="Xu X."/>
            <person name="Sun L."/>
            <person name="Chen S."/>
            <person name="Nie H."/>
            <person name="Peng J."/>
            <person name="Xu J."/>
            <person name="Wang Y."/>
            <person name="Yuan Z."/>
            <person name="Wen Y."/>
            <person name="Yao Z."/>
            <person name="Shen Y."/>
            <person name="Qiang B."/>
            <person name="Hou Y."/>
            <person name="Yu J."/>
            <person name="Jin Q."/>
        </authorList>
    </citation>
    <scope>NUCLEOTIDE SEQUENCE [LARGE SCALE GENOMIC DNA]</scope>
    <source>
        <strain>Sd197</strain>
    </source>
</reference>
<sequence>MMVIRSVERSDVSALMQLASKTGGGLTSLPANEATLSARIERAIKTWQGELPKSEQGYVFVLEDSETGTVAGICAIEVAVGLNDPWYNYRVGTLVHASKELNVYNALPTLFLSNDHTGSSELCTLFLDPDWRKEGNGYLLSKSRFMFMAAFRDKFNDKVVAEMRGVIDEHGYSPFWQSLGKRFFSMDFSRADFLCGTGQKAFIAELMPKHPIYTHFLSQEAQDVIGQVHPQTAPARAVLEKEGFRYRNYIDIFDGGPTLECDIDRVRAIRKSRLVEVAEGQPAQGDFPACLVANENYHHFRVVLVRTDPATERLILTAAQLDALKCHAGDRVRLVRLCAEEKTA</sequence>
<gene>
    <name evidence="1" type="primary">astA</name>
    <name type="ordered locus">SDY_1530</name>
</gene>
<name>ASTA_SHIDS</name>